<accession>A0QVE4</accession>
<accession>I7FJN5</accession>
<feature type="chain" id="PRO_0000350264" description="Probable dual-specificity RNA methyltransferase RlmN">
    <location>
        <begin position="1"/>
        <end position="372"/>
    </location>
</feature>
<feature type="domain" description="Radical SAM core" evidence="2">
    <location>
        <begin position="112"/>
        <end position="359"/>
    </location>
</feature>
<feature type="active site" description="Proton acceptor" evidence="1">
    <location>
        <position position="106"/>
    </location>
</feature>
<feature type="active site" description="S-methylcysteine intermediate" evidence="1">
    <location>
        <position position="365"/>
    </location>
</feature>
<feature type="binding site" evidence="1">
    <location>
        <position position="126"/>
    </location>
    <ligand>
        <name>[4Fe-4S] cluster</name>
        <dbReference type="ChEBI" id="CHEBI:49883"/>
        <note>4Fe-4S-S-AdoMet</note>
    </ligand>
</feature>
<feature type="binding site" evidence="1">
    <location>
        <position position="130"/>
    </location>
    <ligand>
        <name>[4Fe-4S] cluster</name>
        <dbReference type="ChEBI" id="CHEBI:49883"/>
        <note>4Fe-4S-S-AdoMet</note>
    </ligand>
</feature>
<feature type="binding site" evidence="1">
    <location>
        <position position="133"/>
    </location>
    <ligand>
        <name>[4Fe-4S] cluster</name>
        <dbReference type="ChEBI" id="CHEBI:49883"/>
        <note>4Fe-4S-S-AdoMet</note>
    </ligand>
</feature>
<feature type="binding site" evidence="1">
    <location>
        <begin position="186"/>
        <end position="187"/>
    </location>
    <ligand>
        <name>S-adenosyl-L-methionine</name>
        <dbReference type="ChEBI" id="CHEBI:59789"/>
    </ligand>
</feature>
<feature type="binding site" evidence="1">
    <location>
        <position position="220"/>
    </location>
    <ligand>
        <name>S-adenosyl-L-methionine</name>
        <dbReference type="ChEBI" id="CHEBI:59789"/>
    </ligand>
</feature>
<feature type="binding site" evidence="1">
    <location>
        <begin position="243"/>
        <end position="245"/>
    </location>
    <ligand>
        <name>S-adenosyl-L-methionine</name>
        <dbReference type="ChEBI" id="CHEBI:59789"/>
    </ligand>
</feature>
<feature type="binding site" evidence="1">
    <location>
        <position position="322"/>
    </location>
    <ligand>
        <name>S-adenosyl-L-methionine</name>
        <dbReference type="ChEBI" id="CHEBI:59789"/>
    </ligand>
</feature>
<feature type="disulfide bond" description="(transient)" evidence="1">
    <location>
        <begin position="119"/>
        <end position="365"/>
    </location>
</feature>
<gene>
    <name evidence="1" type="primary">rlmN</name>
    <name type="ordered locus">MSMEG_2545</name>
    <name type="ordered locus">MSMEI_2485</name>
</gene>
<dbReference type="EC" id="2.1.1.192" evidence="1"/>
<dbReference type="EMBL" id="CP000480">
    <property type="protein sequence ID" value="ABK74284.1"/>
    <property type="molecule type" value="Genomic_DNA"/>
</dbReference>
<dbReference type="EMBL" id="CP001663">
    <property type="protein sequence ID" value="AFP38953.1"/>
    <property type="molecule type" value="Genomic_DNA"/>
</dbReference>
<dbReference type="RefSeq" id="WP_011728422.1">
    <property type="nucleotide sequence ID" value="NZ_SIJM01000029.1"/>
</dbReference>
<dbReference type="RefSeq" id="YP_886882.1">
    <property type="nucleotide sequence ID" value="NC_008596.1"/>
</dbReference>
<dbReference type="SMR" id="A0QVE4"/>
<dbReference type="STRING" id="246196.MSMEG_2545"/>
<dbReference type="PaxDb" id="246196-MSMEI_2485"/>
<dbReference type="GeneID" id="93457333"/>
<dbReference type="KEGG" id="msb:LJ00_12670"/>
<dbReference type="KEGG" id="msg:MSMEI_2485"/>
<dbReference type="KEGG" id="msm:MSMEG_2545"/>
<dbReference type="PATRIC" id="fig|246196.19.peg.2511"/>
<dbReference type="eggNOG" id="COG0820">
    <property type="taxonomic scope" value="Bacteria"/>
</dbReference>
<dbReference type="OrthoDB" id="9793973at2"/>
<dbReference type="Proteomes" id="UP000000757">
    <property type="component" value="Chromosome"/>
</dbReference>
<dbReference type="Proteomes" id="UP000006158">
    <property type="component" value="Chromosome"/>
</dbReference>
<dbReference type="GO" id="GO:0005737">
    <property type="term" value="C:cytoplasm"/>
    <property type="evidence" value="ECO:0007669"/>
    <property type="project" value="UniProtKB-SubCell"/>
</dbReference>
<dbReference type="GO" id="GO:0051539">
    <property type="term" value="F:4 iron, 4 sulfur cluster binding"/>
    <property type="evidence" value="ECO:0007669"/>
    <property type="project" value="UniProtKB-UniRule"/>
</dbReference>
<dbReference type="GO" id="GO:0046872">
    <property type="term" value="F:metal ion binding"/>
    <property type="evidence" value="ECO:0007669"/>
    <property type="project" value="UniProtKB-KW"/>
</dbReference>
<dbReference type="GO" id="GO:0070040">
    <property type="term" value="F:rRNA (adenine(2503)-C2-)-methyltransferase activity"/>
    <property type="evidence" value="ECO:0007669"/>
    <property type="project" value="UniProtKB-UniRule"/>
</dbReference>
<dbReference type="GO" id="GO:0019843">
    <property type="term" value="F:rRNA binding"/>
    <property type="evidence" value="ECO:0007669"/>
    <property type="project" value="UniProtKB-UniRule"/>
</dbReference>
<dbReference type="GO" id="GO:0002935">
    <property type="term" value="F:tRNA (adenine(37)-C2)-methyltransferase activity"/>
    <property type="evidence" value="ECO:0007669"/>
    <property type="project" value="UniProtKB-UniRule"/>
</dbReference>
<dbReference type="GO" id="GO:0000049">
    <property type="term" value="F:tRNA binding"/>
    <property type="evidence" value="ECO:0007669"/>
    <property type="project" value="UniProtKB-UniRule"/>
</dbReference>
<dbReference type="GO" id="GO:0070475">
    <property type="term" value="P:rRNA base methylation"/>
    <property type="evidence" value="ECO:0007669"/>
    <property type="project" value="UniProtKB-UniRule"/>
</dbReference>
<dbReference type="GO" id="GO:0030488">
    <property type="term" value="P:tRNA methylation"/>
    <property type="evidence" value="ECO:0007669"/>
    <property type="project" value="UniProtKB-UniRule"/>
</dbReference>
<dbReference type="CDD" id="cd01335">
    <property type="entry name" value="Radical_SAM"/>
    <property type="match status" value="1"/>
</dbReference>
<dbReference type="FunFam" id="3.20.20.70:FF:000014">
    <property type="entry name" value="Probable dual-specificity RNA methyltransferase RlmN"/>
    <property type="match status" value="1"/>
</dbReference>
<dbReference type="Gene3D" id="1.10.150.530">
    <property type="match status" value="1"/>
</dbReference>
<dbReference type="Gene3D" id="3.20.20.70">
    <property type="entry name" value="Aldolase class I"/>
    <property type="match status" value="1"/>
</dbReference>
<dbReference type="HAMAP" id="MF_01849">
    <property type="entry name" value="RNA_methyltr_RlmN"/>
    <property type="match status" value="1"/>
</dbReference>
<dbReference type="InterPro" id="IPR013785">
    <property type="entry name" value="Aldolase_TIM"/>
</dbReference>
<dbReference type="InterPro" id="IPR040072">
    <property type="entry name" value="Methyltransferase_A"/>
</dbReference>
<dbReference type="InterPro" id="IPR027492">
    <property type="entry name" value="RNA_MTrfase_RlmN"/>
</dbReference>
<dbReference type="InterPro" id="IPR004383">
    <property type="entry name" value="rRNA_lsu_MTrfase_RlmN/Cfr"/>
</dbReference>
<dbReference type="InterPro" id="IPR007197">
    <property type="entry name" value="rSAM"/>
</dbReference>
<dbReference type="NCBIfam" id="TIGR00048">
    <property type="entry name" value="rRNA_mod_RlmN"/>
    <property type="match status" value="1"/>
</dbReference>
<dbReference type="PANTHER" id="PTHR30544">
    <property type="entry name" value="23S RRNA METHYLTRANSFERASE"/>
    <property type="match status" value="1"/>
</dbReference>
<dbReference type="PANTHER" id="PTHR30544:SF5">
    <property type="entry name" value="RADICAL SAM CORE DOMAIN-CONTAINING PROTEIN"/>
    <property type="match status" value="1"/>
</dbReference>
<dbReference type="Pfam" id="PF04055">
    <property type="entry name" value="Radical_SAM"/>
    <property type="match status" value="1"/>
</dbReference>
<dbReference type="PIRSF" id="PIRSF006004">
    <property type="entry name" value="CHP00048"/>
    <property type="match status" value="1"/>
</dbReference>
<dbReference type="SFLD" id="SFLDF00275">
    <property type="entry name" value="adenosine_C2_methyltransferase"/>
    <property type="match status" value="1"/>
</dbReference>
<dbReference type="SFLD" id="SFLDS00029">
    <property type="entry name" value="Radical_SAM"/>
    <property type="match status" value="1"/>
</dbReference>
<dbReference type="SUPFAM" id="SSF102114">
    <property type="entry name" value="Radical SAM enzymes"/>
    <property type="match status" value="1"/>
</dbReference>
<dbReference type="PROSITE" id="PS51918">
    <property type="entry name" value="RADICAL_SAM"/>
    <property type="match status" value="1"/>
</dbReference>
<reference key="1">
    <citation type="submission" date="2006-10" db="EMBL/GenBank/DDBJ databases">
        <authorList>
            <person name="Fleischmann R.D."/>
            <person name="Dodson R.J."/>
            <person name="Haft D.H."/>
            <person name="Merkel J.S."/>
            <person name="Nelson W.C."/>
            <person name="Fraser C.M."/>
        </authorList>
    </citation>
    <scope>NUCLEOTIDE SEQUENCE [LARGE SCALE GENOMIC DNA]</scope>
    <source>
        <strain>ATCC 700084 / mc(2)155</strain>
    </source>
</reference>
<reference key="2">
    <citation type="journal article" date="2007" name="Genome Biol.">
        <title>Interrupted coding sequences in Mycobacterium smegmatis: authentic mutations or sequencing errors?</title>
        <authorList>
            <person name="Deshayes C."/>
            <person name="Perrodou E."/>
            <person name="Gallien S."/>
            <person name="Euphrasie D."/>
            <person name="Schaeffer C."/>
            <person name="Van-Dorsselaer A."/>
            <person name="Poch O."/>
            <person name="Lecompte O."/>
            <person name="Reyrat J.-M."/>
        </authorList>
    </citation>
    <scope>NUCLEOTIDE SEQUENCE [LARGE SCALE GENOMIC DNA]</scope>
    <source>
        <strain>ATCC 700084 / mc(2)155</strain>
    </source>
</reference>
<reference key="3">
    <citation type="journal article" date="2009" name="Genome Res.">
        <title>Ortho-proteogenomics: multiple proteomes investigation through orthology and a new MS-based protocol.</title>
        <authorList>
            <person name="Gallien S."/>
            <person name="Perrodou E."/>
            <person name="Carapito C."/>
            <person name="Deshayes C."/>
            <person name="Reyrat J.-M."/>
            <person name="Van Dorsselaer A."/>
            <person name="Poch O."/>
            <person name="Schaeffer C."/>
            <person name="Lecompte O."/>
        </authorList>
    </citation>
    <scope>NUCLEOTIDE SEQUENCE [LARGE SCALE GENOMIC DNA]</scope>
    <source>
        <strain>ATCC 700084 / mc(2)155</strain>
    </source>
</reference>
<protein>
    <recommendedName>
        <fullName evidence="1">Probable dual-specificity RNA methyltransferase RlmN</fullName>
        <ecNumber evidence="1">2.1.1.192</ecNumber>
    </recommendedName>
    <alternativeName>
        <fullName evidence="1">23S rRNA (adenine(2503)-C(2))-methyltransferase</fullName>
    </alternativeName>
    <alternativeName>
        <fullName evidence="1">23S rRNA m2A2503 methyltransferase</fullName>
    </alternativeName>
    <alternativeName>
        <fullName evidence="1">Ribosomal RNA large subunit methyltransferase N</fullName>
    </alternativeName>
    <alternativeName>
        <fullName evidence="1">tRNA (adenine(37)-C(2))-methyltransferase</fullName>
    </alternativeName>
    <alternativeName>
        <fullName evidence="1">tRNA m2A37 methyltransferase</fullName>
    </alternativeName>
</protein>
<organism>
    <name type="scientific">Mycolicibacterium smegmatis (strain ATCC 700084 / mc(2)155)</name>
    <name type="common">Mycobacterium smegmatis</name>
    <dbReference type="NCBI Taxonomy" id="246196"/>
    <lineage>
        <taxon>Bacteria</taxon>
        <taxon>Bacillati</taxon>
        <taxon>Actinomycetota</taxon>
        <taxon>Actinomycetes</taxon>
        <taxon>Mycobacteriales</taxon>
        <taxon>Mycobacteriaceae</taxon>
        <taxon>Mycolicibacterium</taxon>
    </lineage>
</organism>
<comment type="function">
    <text evidence="1">Specifically methylates position 2 of adenine 2503 in 23S rRNA and position 2 of adenine 37 in tRNAs.</text>
</comment>
<comment type="catalytic activity">
    <reaction evidence="1">
        <text>adenosine(2503) in 23S rRNA + 2 reduced [2Fe-2S]-[ferredoxin] + 2 S-adenosyl-L-methionine = 2-methyladenosine(2503) in 23S rRNA + 5'-deoxyadenosine + L-methionine + 2 oxidized [2Fe-2S]-[ferredoxin] + S-adenosyl-L-homocysteine</text>
        <dbReference type="Rhea" id="RHEA:42916"/>
        <dbReference type="Rhea" id="RHEA-COMP:10000"/>
        <dbReference type="Rhea" id="RHEA-COMP:10001"/>
        <dbReference type="Rhea" id="RHEA-COMP:10152"/>
        <dbReference type="Rhea" id="RHEA-COMP:10282"/>
        <dbReference type="ChEBI" id="CHEBI:17319"/>
        <dbReference type="ChEBI" id="CHEBI:33737"/>
        <dbReference type="ChEBI" id="CHEBI:33738"/>
        <dbReference type="ChEBI" id="CHEBI:57844"/>
        <dbReference type="ChEBI" id="CHEBI:57856"/>
        <dbReference type="ChEBI" id="CHEBI:59789"/>
        <dbReference type="ChEBI" id="CHEBI:74411"/>
        <dbReference type="ChEBI" id="CHEBI:74497"/>
        <dbReference type="EC" id="2.1.1.192"/>
    </reaction>
</comment>
<comment type="catalytic activity">
    <reaction evidence="1">
        <text>adenosine(37) in tRNA + 2 reduced [2Fe-2S]-[ferredoxin] + 2 S-adenosyl-L-methionine = 2-methyladenosine(37) in tRNA + 5'-deoxyadenosine + L-methionine + 2 oxidized [2Fe-2S]-[ferredoxin] + S-adenosyl-L-homocysteine</text>
        <dbReference type="Rhea" id="RHEA:43332"/>
        <dbReference type="Rhea" id="RHEA-COMP:10000"/>
        <dbReference type="Rhea" id="RHEA-COMP:10001"/>
        <dbReference type="Rhea" id="RHEA-COMP:10162"/>
        <dbReference type="Rhea" id="RHEA-COMP:10485"/>
        <dbReference type="ChEBI" id="CHEBI:17319"/>
        <dbReference type="ChEBI" id="CHEBI:33737"/>
        <dbReference type="ChEBI" id="CHEBI:33738"/>
        <dbReference type="ChEBI" id="CHEBI:57844"/>
        <dbReference type="ChEBI" id="CHEBI:57856"/>
        <dbReference type="ChEBI" id="CHEBI:59789"/>
        <dbReference type="ChEBI" id="CHEBI:74411"/>
        <dbReference type="ChEBI" id="CHEBI:74497"/>
        <dbReference type="EC" id="2.1.1.192"/>
    </reaction>
</comment>
<comment type="cofactor">
    <cofactor evidence="1">
        <name>[4Fe-4S] cluster</name>
        <dbReference type="ChEBI" id="CHEBI:49883"/>
    </cofactor>
    <text evidence="1">Binds 1 [4Fe-4S] cluster. The cluster is coordinated with 3 cysteines and an exchangeable S-adenosyl-L-methionine.</text>
</comment>
<comment type="subcellular location">
    <subcellularLocation>
        <location evidence="1">Cytoplasm</location>
    </subcellularLocation>
</comment>
<comment type="miscellaneous">
    <text evidence="1">Reaction proceeds by a ping-pong mechanism involving intermediate methylation of a conserved cysteine residue.</text>
</comment>
<comment type="similarity">
    <text evidence="1">Belongs to the radical SAM superfamily. RlmN family.</text>
</comment>
<keyword id="KW-0004">4Fe-4S</keyword>
<keyword id="KW-0963">Cytoplasm</keyword>
<keyword id="KW-1015">Disulfide bond</keyword>
<keyword id="KW-0408">Iron</keyword>
<keyword id="KW-0411">Iron-sulfur</keyword>
<keyword id="KW-0479">Metal-binding</keyword>
<keyword id="KW-0489">Methyltransferase</keyword>
<keyword id="KW-1185">Reference proteome</keyword>
<keyword id="KW-0698">rRNA processing</keyword>
<keyword id="KW-0949">S-adenosyl-L-methionine</keyword>
<keyword id="KW-0808">Transferase</keyword>
<keyword id="KW-0819">tRNA processing</keyword>
<evidence type="ECO:0000255" key="1">
    <source>
        <dbReference type="HAMAP-Rule" id="MF_01849"/>
    </source>
</evidence>
<evidence type="ECO:0000255" key="2">
    <source>
        <dbReference type="PROSITE-ProRule" id="PRU01266"/>
    </source>
</evidence>
<sequence length="372" mass="40389">MKQQLVFEAPRRAMPPQHLADLDETARAAAVTELGLPAFRAKQLANQYYGRLIADPQQMTDLPAAVRDQVAEKLFPTLINPVREIQCDAGETRKTLWRAIDGSTFESVLMRYPQRNTVCISSQAGCGMACPFCATGQGGLQRNLTTAEILEQVRAASSTMRAEHFGRTAGTAGGGRLSNIVFMGMGEPLANYNRVLGAVRRIIAAPPNGFGISARSVTVSTVGLAPAIRKLADERLGVTLALSLHAPDDELRDTLVPVNNRWKVSEVLDAARYYADTTGRRVSIEYALIRDVNDQPWRADLLGKKLHGALGPLAHVNVIPLNPTPGSEWDASPKPAEREFVKRVRERGVSCTVRDTRGREIAAACGQLAAEG</sequence>
<proteinExistence type="inferred from homology"/>
<name>RLMN_MYCS2</name>